<reference key="1">
    <citation type="submission" date="2007-02" db="EMBL/GenBank/DDBJ databases">
        <title>Complete sequence of Pyrobaculum calidifontis JCM 11548.</title>
        <authorList>
            <consortium name="US DOE Joint Genome Institute"/>
            <person name="Copeland A."/>
            <person name="Lucas S."/>
            <person name="Lapidus A."/>
            <person name="Barry K."/>
            <person name="Glavina del Rio T."/>
            <person name="Dalin E."/>
            <person name="Tice H."/>
            <person name="Pitluck S."/>
            <person name="Chain P."/>
            <person name="Malfatti S."/>
            <person name="Shin M."/>
            <person name="Vergez L."/>
            <person name="Schmutz J."/>
            <person name="Larimer F."/>
            <person name="Land M."/>
            <person name="Hauser L."/>
            <person name="Kyrpides N."/>
            <person name="Mikhailova N."/>
            <person name="Cozen A.E."/>
            <person name="Fitz-Gibbon S.T."/>
            <person name="House C.H."/>
            <person name="Saltikov C."/>
            <person name="Lowe T.M."/>
            <person name="Richardson P."/>
        </authorList>
    </citation>
    <scope>NUCLEOTIDE SEQUENCE [LARGE SCALE GENOMIC DNA]</scope>
    <source>
        <strain>DSM 21063 / JCM 11548 / VA1</strain>
    </source>
</reference>
<sequence>MSLASRRKVRIRLYGTNPADLDQVAREIVDLAKKMGVAVRGPIPLPTKRLMVTVRRAPSGQGYHTFDHWELRISKRLIDIEASERVLRRLMTIRVPDTVKIELQLI</sequence>
<protein>
    <recommendedName>
        <fullName evidence="1">Small ribosomal subunit protein uS10</fullName>
    </recommendedName>
    <alternativeName>
        <fullName evidence="2">30S ribosomal protein S10</fullName>
    </alternativeName>
</protein>
<gene>
    <name evidence="1" type="primary">rps10</name>
    <name type="ordered locus">Pcal_0354</name>
</gene>
<keyword id="KW-0002">3D-structure</keyword>
<keyword id="KW-0687">Ribonucleoprotein</keyword>
<keyword id="KW-0689">Ribosomal protein</keyword>
<organism>
    <name type="scientific">Pyrobaculum calidifontis (strain DSM 21063 / JCM 11548 / VA1)</name>
    <dbReference type="NCBI Taxonomy" id="410359"/>
    <lineage>
        <taxon>Archaea</taxon>
        <taxon>Thermoproteota</taxon>
        <taxon>Thermoprotei</taxon>
        <taxon>Thermoproteales</taxon>
        <taxon>Thermoproteaceae</taxon>
        <taxon>Pyrobaculum</taxon>
    </lineage>
</organism>
<evidence type="ECO:0000255" key="1">
    <source>
        <dbReference type="HAMAP-Rule" id="MF_00508"/>
    </source>
</evidence>
<evidence type="ECO:0000305" key="2"/>
<dbReference type="EMBL" id="CP000561">
    <property type="protein sequence ID" value="ABO07789.1"/>
    <property type="molecule type" value="Genomic_DNA"/>
</dbReference>
<dbReference type="RefSeq" id="WP_011849046.1">
    <property type="nucleotide sequence ID" value="NC_009073.1"/>
</dbReference>
<dbReference type="PDB" id="9E71">
    <property type="method" value="EM"/>
    <property type="resolution" value="2.36 A"/>
    <property type="chains" value="BL=1-106"/>
</dbReference>
<dbReference type="PDB" id="9E7F">
    <property type="method" value="EM"/>
    <property type="resolution" value="2.53 A"/>
    <property type="chains" value="BL=1-106"/>
</dbReference>
<dbReference type="PDBsum" id="9E71"/>
<dbReference type="PDBsum" id="9E7F"/>
<dbReference type="EMDB" id="EMD-47628"/>
<dbReference type="EMDB" id="EMD-47668"/>
<dbReference type="SMR" id="A3MT22"/>
<dbReference type="STRING" id="410359.Pcal_0354"/>
<dbReference type="GeneID" id="4908819"/>
<dbReference type="KEGG" id="pcl:Pcal_0354"/>
<dbReference type="eggNOG" id="arCOG01758">
    <property type="taxonomic scope" value="Archaea"/>
</dbReference>
<dbReference type="HOGENOM" id="CLU_122625_0_1_2"/>
<dbReference type="OrthoDB" id="371736at2157"/>
<dbReference type="Proteomes" id="UP000001431">
    <property type="component" value="Chromosome"/>
</dbReference>
<dbReference type="GO" id="GO:0015935">
    <property type="term" value="C:small ribosomal subunit"/>
    <property type="evidence" value="ECO:0007669"/>
    <property type="project" value="InterPro"/>
</dbReference>
<dbReference type="GO" id="GO:0003735">
    <property type="term" value="F:structural constituent of ribosome"/>
    <property type="evidence" value="ECO:0007669"/>
    <property type="project" value="InterPro"/>
</dbReference>
<dbReference type="GO" id="GO:0000049">
    <property type="term" value="F:tRNA binding"/>
    <property type="evidence" value="ECO:0007669"/>
    <property type="project" value="UniProtKB-UniRule"/>
</dbReference>
<dbReference type="GO" id="GO:0006412">
    <property type="term" value="P:translation"/>
    <property type="evidence" value="ECO:0007669"/>
    <property type="project" value="UniProtKB-UniRule"/>
</dbReference>
<dbReference type="FunFam" id="3.30.70.600:FF:000004">
    <property type="entry name" value="30S ribosomal protein S10"/>
    <property type="match status" value="1"/>
</dbReference>
<dbReference type="Gene3D" id="3.30.70.600">
    <property type="entry name" value="Ribosomal protein S10 domain"/>
    <property type="match status" value="1"/>
</dbReference>
<dbReference type="HAMAP" id="MF_00508">
    <property type="entry name" value="Ribosomal_uS10"/>
    <property type="match status" value="1"/>
</dbReference>
<dbReference type="InterPro" id="IPR001848">
    <property type="entry name" value="Ribosomal_uS10"/>
</dbReference>
<dbReference type="InterPro" id="IPR018268">
    <property type="entry name" value="Ribosomal_uS10_CS"/>
</dbReference>
<dbReference type="InterPro" id="IPR027486">
    <property type="entry name" value="Ribosomal_uS10_dom"/>
</dbReference>
<dbReference type="InterPro" id="IPR036838">
    <property type="entry name" value="Ribosomal_uS10_dom_sf"/>
</dbReference>
<dbReference type="InterPro" id="IPR005729">
    <property type="entry name" value="Ribosomal_uS10_euk/arc"/>
</dbReference>
<dbReference type="NCBIfam" id="TIGR01046">
    <property type="entry name" value="uS10_euk_arch"/>
    <property type="match status" value="1"/>
</dbReference>
<dbReference type="PANTHER" id="PTHR11700">
    <property type="entry name" value="30S RIBOSOMAL PROTEIN S10 FAMILY MEMBER"/>
    <property type="match status" value="1"/>
</dbReference>
<dbReference type="Pfam" id="PF00338">
    <property type="entry name" value="Ribosomal_S10"/>
    <property type="match status" value="1"/>
</dbReference>
<dbReference type="PRINTS" id="PR00971">
    <property type="entry name" value="RIBOSOMALS10"/>
</dbReference>
<dbReference type="SMART" id="SM01403">
    <property type="entry name" value="Ribosomal_S10"/>
    <property type="match status" value="1"/>
</dbReference>
<dbReference type="SUPFAM" id="SSF54999">
    <property type="entry name" value="Ribosomal protein S10"/>
    <property type="match status" value="1"/>
</dbReference>
<dbReference type="PROSITE" id="PS00361">
    <property type="entry name" value="RIBOSOMAL_S10"/>
    <property type="match status" value="1"/>
</dbReference>
<accession>A3MT22</accession>
<name>RS10_PYRCJ</name>
<comment type="function">
    <text evidence="1">Involved in the binding of tRNA to the ribosomes.</text>
</comment>
<comment type="subunit">
    <text evidence="1">Part of the 30S ribosomal subunit.</text>
</comment>
<comment type="similarity">
    <text evidence="1">Belongs to the universal ribosomal protein uS10 family.</text>
</comment>
<feature type="chain" id="PRO_1000015092" description="Small ribosomal subunit protein uS10">
    <location>
        <begin position="1"/>
        <end position="106"/>
    </location>
</feature>
<proteinExistence type="evidence at protein level"/>